<feature type="initiator methionine" description="Removed" evidence="2">
    <location>
        <position position="1"/>
    </location>
</feature>
<feature type="chain" id="PRO_0000127119" description="Aryl hydrocarbon receptor nuclear translocator">
    <location>
        <begin position="2"/>
        <end position="791"/>
    </location>
</feature>
<feature type="domain" description="bHLH" evidence="4">
    <location>
        <begin position="89"/>
        <end position="142"/>
    </location>
</feature>
<feature type="domain" description="PAS 1" evidence="3">
    <location>
        <begin position="161"/>
        <end position="235"/>
    </location>
</feature>
<feature type="domain" description="PAS 2" evidence="3">
    <location>
        <begin position="349"/>
        <end position="419"/>
    </location>
</feature>
<feature type="domain" description="PAC">
    <location>
        <begin position="424"/>
        <end position="467"/>
    </location>
</feature>
<feature type="region of interest" description="Disordered" evidence="5">
    <location>
        <begin position="1"/>
        <end position="33"/>
    </location>
</feature>
<feature type="region of interest" description="Disordered" evidence="5">
    <location>
        <begin position="73"/>
        <end position="97"/>
    </location>
</feature>
<feature type="region of interest" description="DNA-binding" evidence="8 10">
    <location>
        <begin position="88"/>
        <end position="128"/>
    </location>
</feature>
<feature type="region of interest" description="Required for heterodimer formation with EPAS1" evidence="8">
    <location>
        <begin position="112"/>
        <end position="264"/>
    </location>
</feature>
<feature type="region of interest" description="Required for heterodimer formation with HIF1A" evidence="8">
    <location>
        <begin position="112"/>
        <end position="168"/>
    </location>
</feature>
<feature type="region of interest" description="Mediates the transcription activity and dimerization of the AHR:ARNT complex" evidence="7">
    <location>
        <begin position="167"/>
        <end position="171"/>
    </location>
</feature>
<feature type="region of interest" description="Disordered" evidence="5">
    <location>
        <begin position="465"/>
        <end position="508"/>
    </location>
</feature>
<feature type="region of interest" description="Disordered" evidence="5">
    <location>
        <begin position="530"/>
        <end position="554"/>
    </location>
</feature>
<feature type="region of interest" description="Disordered" evidence="5">
    <location>
        <begin position="631"/>
        <end position="667"/>
    </location>
</feature>
<feature type="region of interest" description="Disordered" evidence="5">
    <location>
        <begin position="682"/>
        <end position="715"/>
    </location>
</feature>
<feature type="region of interest" description="Disordered" evidence="5">
    <location>
        <begin position="730"/>
        <end position="791"/>
    </location>
</feature>
<feature type="compositionally biased region" description="Polar residues" evidence="5">
    <location>
        <begin position="1"/>
        <end position="14"/>
    </location>
</feature>
<feature type="compositionally biased region" description="Polar residues" evidence="5">
    <location>
        <begin position="465"/>
        <end position="490"/>
    </location>
</feature>
<feature type="compositionally biased region" description="Polar residues" evidence="5">
    <location>
        <begin position="498"/>
        <end position="508"/>
    </location>
</feature>
<feature type="compositionally biased region" description="Basic and acidic residues" evidence="5">
    <location>
        <begin position="539"/>
        <end position="554"/>
    </location>
</feature>
<feature type="compositionally biased region" description="Polar residues" evidence="5">
    <location>
        <begin position="631"/>
        <end position="646"/>
    </location>
</feature>
<feature type="compositionally biased region" description="Polar residues" evidence="5">
    <location>
        <begin position="653"/>
        <end position="667"/>
    </location>
</feature>
<feature type="compositionally biased region" description="Polar residues" evidence="5">
    <location>
        <begin position="742"/>
        <end position="756"/>
    </location>
</feature>
<feature type="modified residue" description="N-acetylalanine" evidence="2">
    <location>
        <position position="2"/>
    </location>
</feature>
<feature type="modified residue" description="Phosphoserine" evidence="22">
    <location>
        <position position="77"/>
    </location>
</feature>
<feature type="cross-link" description="Glycyl lysine isopeptide (Lys-Gly) (interchain with G-Cter in SUMO2)" evidence="2">
    <location>
        <position position="58"/>
    </location>
</feature>
<feature type="splice variant" id="VSP_002093" description="In isoform Short." evidence="12">
    <original>SDDEQSSADKERLARENHSEIERR</original>
    <variation>TKFL</variation>
    <location>
        <begin position="77"/>
        <end position="100"/>
    </location>
</feature>
<feature type="mutagenesis site" description="Reduces DNA binding." evidence="8">
    <original>H</original>
    <variation>A</variation>
    <location>
        <position position="94"/>
    </location>
</feature>
<feature type="mutagenesis site" description="Reduces DNA binding." evidence="8">
    <original>E</original>
    <variation>A</variation>
    <location>
        <position position="98"/>
    </location>
</feature>
<feature type="mutagenesis site" description="Reduces DNA binding. Decreases transcription factor activity." evidence="8 10">
    <original>R</original>
    <variation>E</variation>
    <location>
        <position position="102"/>
    </location>
</feature>
<feature type="mutagenesis site" description="Interferes with transcription factor activity." evidence="10">
    <original>L</original>
    <variation>D</variation>
    <location>
        <position position="112"/>
    </location>
</feature>
<feature type="mutagenesis site" description="Impairs heterodimer formation with EPAS1. Impairs heterodimer formation with HIF1A. Significantly destabilizes ARNT?s heterodimeric interactions with both NPAS1 and NPAS3. Compromises SIM1:ARNT heterodimer stability. Compromise NPAS4:ARNT heterodimer stability. Compromise AHR:ARNT heterodimer stability." evidence="8 9">
    <original>L</original>
    <variation>E</variation>
    <location>
        <position position="112"/>
    </location>
</feature>
<feature type="mutagenesis site" description="Impairs heterodimer formation with EPAS1. Impairs heterodimer formation with HIF1A. Significantly destabilizes ARNT?s heterodimeric interactions with both NPAS1 and NPAS3. Compromises SIM1:ARNT heterodimer stability. Compromise NPAS4:ARNT heterodimer stability. Compromise AHR:ARNT heterodimer stability." evidence="8 9">
    <original>L</original>
    <variation>E</variation>
    <location>
        <position position="132"/>
    </location>
</feature>
<feature type="mutagenesis site" description="Impairs heterodimer formation with EPAS1. Impairs heterodimer formation with HIF1A. Significantly destabilizes ARNT?s heterodimeric interactions with both NPAS1 and NPAS3. Compromises SIM1:ARNT heterodimer stability. Compromise NPAS4:ARNT heterodimer stability. Compromise AHR:ARNT heterodimer stability." evidence="8 9">
    <original>V</original>
    <variation>D</variation>
    <location>
        <position position="136"/>
    </location>
</feature>
<feature type="mutagenesis site" description="Interferes with transcription factor activity." evidence="10">
    <original>M</original>
    <variation>D</variation>
    <location>
        <position position="139"/>
    </location>
</feature>
<feature type="mutagenesis site" description="Does not affect transcription factor activity." evidence="10">
    <original>L</original>
    <variation>D</variation>
    <location>
        <position position="164"/>
    </location>
</feature>
<feature type="mutagenesis site" description="Highly reduces transcription activity. Impairs interaction with AHR. Impairs heterodimer formation with EPAS1. Impairs heterodimer formation with HIF1A. Significantly destabilizes ARNT?s heterodimeric interactions with both NPAS1 and NPAS3. Compromises SIM1:ARNT heterodimer stability. Compromise NPAS4:ARNT heterodimer stability. Compromise AHR:ARNT heterodimer stability." evidence="7 8 9">
    <original>L</original>
    <variation>E</variation>
    <location>
        <position position="167"/>
    </location>
</feature>
<feature type="mutagenesis site" description="Highly reduces transcription activity. Impairs interaction with AHR. Impairs heterodimer formation with EPAS1. Impairs heterodimer formation with HIF1A. Significantly destabilizes ARNT?s heterodimeric interactions with both NPAS1 and NPAS3. Compromises SIM1:ARNT heterodimer stability. Compromise NPAS4:ARNT heterodimer stability. Compromise AHR:ARNT heterodimer stability." evidence="7 8 9">
    <original>I</original>
    <variation>D</variation>
    <location>
        <position position="168"/>
    </location>
</feature>
<feature type="mutagenesis site" description="Reduces transcription activity. Markedly reduces interaction with AHR. Impairs heterodimer formation with EPAS1. Markedly decreases heterodimer formation with HIF1A. Significantly destabilizes ARNT?s heterodimeric interactions with both NPAS1 and NPAS3. Compromises SIM1:ARNT heterodimer stability. Compromise NPAS4:ARNT heterodimer stability. Compromise AHR:ARNT heterodimer stability." evidence="7 8 9">
    <original>A</original>
    <variation>D</variation>
    <location>
        <position position="171"/>
    </location>
</feature>
<feature type="mutagenesis site" description="Impairs heterodimer formation with EPAS1. Markedly decreases heterodimer formation with HIF1A. Significantly destabilizes ARNT?s heterodimeric interactions with both NPAS1 and NPAS3. Compromises SIM1:ARNT heterodimer stability. Does not compromise NPAS4:ARNT heterodimer stability. Does not compromise AHR:ARNT heterodimer stability." evidence="8 9">
    <original>I</original>
    <variation>D</variation>
    <location>
        <position position="264"/>
    </location>
</feature>
<feature type="mutagenesis site" description="Markedly decreases heterodimer formation with EPAS1. Decreases heterodimer formation with HIF1A. Significantly destabilizes ARNT?s heterodimeric interactions with both NPAS1 and NPAS3. Compromises SIM1:ARNT heterodimer stability. Does not compromise NPAS4:ARNT heterodimer stability. Does not compromise AHR:ARNT heterodimer stability." evidence="8 9">
    <original>R</original>
    <variation>A</variation>
    <location>
        <position position="266"/>
    </location>
</feature>
<feature type="mutagenesis site" description="Markedly decreases heterodimer formation with EPAS1. Markedly decreases heterodimer formation with HIF1A. Significantly destabilizes ARNT?s heterodimeric interactions with both NPAS1 and NPAS3. Compromises SIM1:ARNT heterodimer stability. Does not compromise NPAS4:ARNT heterodimer stability. Does not compromise AHR:ARNT heterodimer stability." evidence="8 9">
    <original>V</original>
    <variation>D</variation>
    <location>
        <position position="305"/>
    </location>
</feature>
<feature type="mutagenesis site" description="Decreases heterodimer formation with EPAS1. Decreases heterodimer formation with HIF1A. Significantly destabilizes ARNT?s heterodimeric interactions with both NPAS1 and NPAS3. Compromises SIM1:ARNT heterodimer stability. Does not compromise NPAS4:ARNT heterodimer stability. Does not compromise AHR:ARNT heterodimer stability." evidence="8 9">
    <original>H</original>
    <variation>A</variation>
    <location>
        <position position="307"/>
    </location>
</feature>
<feature type="mutagenesis site" description="Markedly decreases heterodimer formation with EPAS1. Markedly decreases heterodimer formation with HIF1A. Impairs heterodimer formation with EPAS1; when associated with N-448. Impairs heterodimer formation with HIF1A; when associated with N-448. Significantly destabilizes ARNT?s heterodimeric interactions with both NPAS1 and NPAS3. Compromises SIM1:ARNT heterodimer stability. Does not compromise NPAS4:ARNT heterodimer stability. Does not compromise AHR:ARNT heterodimer stability." evidence="8 9">
    <original>R</original>
    <variation>A</variation>
    <location>
        <position position="366"/>
    </location>
</feature>
<feature type="mutagenesis site" description="Decreases heterodimer formation with EPAS1. Decreases heterodimer formation with HIF1A. Impairs heterodimer formation with EPAS1; when associated with A-366. Impairs heterodimer formation with HIF1A; when associated with A-366. Significantly destabilizes ARNT?s heterodimeric interactions with both NPAS1 and NPAS3. Compromises SIM1:ARNT heterodimer stability. Does not compromise NPAS4:ARNT heterodimer stability. Does not compromise AHR:ARNT heterodimer stability." evidence="8 9">
    <original>N</original>
    <variation>A</variation>
    <location>
        <position position="448"/>
    </location>
</feature>
<feature type="mutagenesis site" description="Decreases heterodimer formation with EPAS1. Decreases heterodimer formation with HIF1A. Significantly destabilizes ARNT?s heterodimeric interactions with both NPAS1 and NPAS3. Compromises SIM1:ARNT heterodimer stability. Does not compromise NPAS4:ARNT heterodimer stability. Does not compromise AHR:ARNT heterodimer stability." evidence="8 9">
    <original>Y</original>
    <variation>D</variation>
    <location>
        <position position="456"/>
    </location>
</feature>
<feature type="sequence conflict" description="In Ref. 2; AAA61732." evidence="13" ref="2">
    <original>S</original>
    <variation>T</variation>
    <location>
        <position position="411"/>
    </location>
</feature>
<feature type="sequence conflict" description="In Ref. 2; AAA61732." evidence="13" ref="2">
    <original>A</original>
    <variation>R</variation>
    <location>
        <position position="534"/>
    </location>
</feature>
<feature type="sequence conflict" description="In Ref. 1; AAA56717." evidence="13" ref="1">
    <original>S</original>
    <variation>T</variation>
    <location>
        <position position="644"/>
    </location>
</feature>
<feature type="sequence conflict" description="In Ref. 2; AAA61732." evidence="13" ref="2">
    <original>A</original>
    <variation>C</variation>
    <location>
        <position position="650"/>
    </location>
</feature>
<feature type="helix" evidence="26">
    <location>
        <begin position="99"/>
        <end position="115"/>
    </location>
</feature>
<feature type="helix" evidence="23">
    <location>
        <begin position="117"/>
        <end position="120"/>
    </location>
</feature>
<feature type="strand" evidence="23">
    <location>
        <begin position="122"/>
        <end position="124"/>
    </location>
</feature>
<feature type="helix" evidence="26">
    <location>
        <begin position="128"/>
        <end position="141"/>
    </location>
</feature>
<feature type="helix" evidence="26">
    <location>
        <begin position="161"/>
        <end position="171"/>
    </location>
</feature>
<feature type="strand" evidence="26">
    <location>
        <begin position="172"/>
        <end position="180"/>
    </location>
</feature>
<feature type="turn" evidence="26">
    <location>
        <begin position="181"/>
        <end position="183"/>
    </location>
</feature>
<feature type="strand" evidence="26">
    <location>
        <begin position="185"/>
        <end position="189"/>
    </location>
</feature>
<feature type="helix" evidence="26">
    <location>
        <begin position="193"/>
        <end position="197"/>
    </location>
</feature>
<feature type="helix" evidence="26">
    <location>
        <begin position="201"/>
        <end position="204"/>
    </location>
</feature>
<feature type="strand" evidence="25">
    <location>
        <begin position="205"/>
        <end position="208"/>
    </location>
</feature>
<feature type="helix" evidence="26">
    <location>
        <begin position="209"/>
        <end position="212"/>
    </location>
</feature>
<feature type="helix" evidence="26">
    <location>
        <begin position="215"/>
        <end position="217"/>
    </location>
</feature>
<feature type="helix" evidence="26">
    <location>
        <begin position="218"/>
        <end position="224"/>
    </location>
</feature>
<feature type="strand" evidence="26">
    <location>
        <begin position="228"/>
        <end position="230"/>
    </location>
</feature>
<feature type="strand" evidence="26">
    <location>
        <begin position="260"/>
        <end position="268"/>
    </location>
</feature>
<feature type="strand" evidence="24">
    <location>
        <begin position="293"/>
        <end position="295"/>
    </location>
</feature>
<feature type="strand" evidence="26">
    <location>
        <begin position="303"/>
        <end position="315"/>
    </location>
</feature>
<feature type="strand" evidence="26">
    <location>
        <begin position="334"/>
        <end position="343"/>
    </location>
</feature>
<feature type="strand" evidence="26">
    <location>
        <begin position="357"/>
        <end position="359"/>
    </location>
</feature>
<feature type="strand" evidence="27">
    <location>
        <begin position="362"/>
        <end position="367"/>
    </location>
</feature>
<feature type="strand" evidence="27">
    <location>
        <begin position="372"/>
        <end position="376"/>
    </location>
</feature>
<feature type="helix" evidence="27">
    <location>
        <begin position="380"/>
        <end position="384"/>
    </location>
</feature>
<feature type="helix" evidence="27">
    <location>
        <begin position="388"/>
        <end position="391"/>
    </location>
</feature>
<feature type="helix" evidence="27">
    <location>
        <begin position="396"/>
        <end position="399"/>
    </location>
</feature>
<feature type="helix" evidence="27">
    <location>
        <begin position="402"/>
        <end position="404"/>
    </location>
</feature>
<feature type="helix" evidence="27">
    <location>
        <begin position="405"/>
        <end position="417"/>
    </location>
</feature>
<feature type="turn" evidence="27">
    <location>
        <begin position="418"/>
        <end position="420"/>
    </location>
</feature>
<feature type="strand" evidence="27">
    <location>
        <begin position="423"/>
        <end position="430"/>
    </location>
</feature>
<feature type="strand" evidence="26">
    <location>
        <begin position="432"/>
        <end position="434"/>
    </location>
</feature>
<feature type="strand" evidence="27">
    <location>
        <begin position="436"/>
        <end position="447"/>
    </location>
</feature>
<feature type="turn" evidence="27">
    <location>
        <begin position="449"/>
        <end position="451"/>
    </location>
</feature>
<feature type="strand" evidence="27">
    <location>
        <begin position="454"/>
        <end position="463"/>
    </location>
</feature>
<keyword id="KW-0002">3D-structure</keyword>
<keyword id="KW-0007">Acetylation</keyword>
<keyword id="KW-0010">Activator</keyword>
<keyword id="KW-0025">Alternative splicing</keyword>
<keyword id="KW-0238">DNA-binding</keyword>
<keyword id="KW-1017">Isopeptide bond</keyword>
<keyword id="KW-0539">Nucleus</keyword>
<keyword id="KW-0597">Phosphoprotein</keyword>
<keyword id="KW-1185">Reference proteome</keyword>
<keyword id="KW-0677">Repeat</keyword>
<keyword id="KW-0804">Transcription</keyword>
<keyword id="KW-0805">Transcription regulation</keyword>
<keyword id="KW-0832">Ubl conjugation</keyword>
<name>ARNT_MOUSE</name>
<reference key="1">
    <citation type="journal article" date="1994" name="Mol. Cell. Biol.">
        <title>Identification of functional domains of the aryl hydrocarbon receptor nuclear translocator protein (ARNT).</title>
        <authorList>
            <person name="Reisz-Porszasz S."/>
            <person name="Probst M.R."/>
            <person name="Fukunaga B.N."/>
            <person name="Hankinson O."/>
        </authorList>
    </citation>
    <scope>NUCLEOTIDE SEQUENCE [MRNA] (ISOFORM LONG)</scope>
    <source>
        <strain>C57BL/6J</strain>
        <tissue>Liver</tissue>
    </source>
</reference>
<reference key="2">
    <citation type="journal article" date="1994" name="J. Biol. Chem.">
        <title>Transcriptional activation function of the mouse Ah receptor nuclear translocator.</title>
        <authorList>
            <person name="Li H."/>
            <person name="Dong L."/>
            <person name="Whitlock J.P. Jr."/>
        </authorList>
    </citation>
    <scope>NUCLEOTIDE SEQUENCE [MRNA] (ISOFORM SHORT)</scope>
    <source>
        <strain>C57BL/6J</strain>
    </source>
</reference>
<reference key="3">
    <citation type="journal article" date="2005" name="Science">
        <title>The transcriptional landscape of the mammalian genome.</title>
        <authorList>
            <person name="Carninci P."/>
            <person name="Kasukawa T."/>
            <person name="Katayama S."/>
            <person name="Gough J."/>
            <person name="Frith M.C."/>
            <person name="Maeda N."/>
            <person name="Oyama R."/>
            <person name="Ravasi T."/>
            <person name="Lenhard B."/>
            <person name="Wells C."/>
            <person name="Kodzius R."/>
            <person name="Shimokawa K."/>
            <person name="Bajic V.B."/>
            <person name="Brenner S.E."/>
            <person name="Batalov S."/>
            <person name="Forrest A.R."/>
            <person name="Zavolan M."/>
            <person name="Davis M.J."/>
            <person name="Wilming L.G."/>
            <person name="Aidinis V."/>
            <person name="Allen J.E."/>
            <person name="Ambesi-Impiombato A."/>
            <person name="Apweiler R."/>
            <person name="Aturaliya R.N."/>
            <person name="Bailey T.L."/>
            <person name="Bansal M."/>
            <person name="Baxter L."/>
            <person name="Beisel K.W."/>
            <person name="Bersano T."/>
            <person name="Bono H."/>
            <person name="Chalk A.M."/>
            <person name="Chiu K.P."/>
            <person name="Choudhary V."/>
            <person name="Christoffels A."/>
            <person name="Clutterbuck D.R."/>
            <person name="Crowe M.L."/>
            <person name="Dalla E."/>
            <person name="Dalrymple B.P."/>
            <person name="de Bono B."/>
            <person name="Della Gatta G."/>
            <person name="di Bernardo D."/>
            <person name="Down T."/>
            <person name="Engstrom P."/>
            <person name="Fagiolini M."/>
            <person name="Faulkner G."/>
            <person name="Fletcher C.F."/>
            <person name="Fukushima T."/>
            <person name="Furuno M."/>
            <person name="Futaki S."/>
            <person name="Gariboldi M."/>
            <person name="Georgii-Hemming P."/>
            <person name="Gingeras T.R."/>
            <person name="Gojobori T."/>
            <person name="Green R.E."/>
            <person name="Gustincich S."/>
            <person name="Harbers M."/>
            <person name="Hayashi Y."/>
            <person name="Hensch T.K."/>
            <person name="Hirokawa N."/>
            <person name="Hill D."/>
            <person name="Huminiecki L."/>
            <person name="Iacono M."/>
            <person name="Ikeo K."/>
            <person name="Iwama A."/>
            <person name="Ishikawa T."/>
            <person name="Jakt M."/>
            <person name="Kanapin A."/>
            <person name="Katoh M."/>
            <person name="Kawasawa Y."/>
            <person name="Kelso J."/>
            <person name="Kitamura H."/>
            <person name="Kitano H."/>
            <person name="Kollias G."/>
            <person name="Krishnan S.P."/>
            <person name="Kruger A."/>
            <person name="Kummerfeld S.K."/>
            <person name="Kurochkin I.V."/>
            <person name="Lareau L.F."/>
            <person name="Lazarevic D."/>
            <person name="Lipovich L."/>
            <person name="Liu J."/>
            <person name="Liuni S."/>
            <person name="McWilliam S."/>
            <person name="Madan Babu M."/>
            <person name="Madera M."/>
            <person name="Marchionni L."/>
            <person name="Matsuda H."/>
            <person name="Matsuzawa S."/>
            <person name="Miki H."/>
            <person name="Mignone F."/>
            <person name="Miyake S."/>
            <person name="Morris K."/>
            <person name="Mottagui-Tabar S."/>
            <person name="Mulder N."/>
            <person name="Nakano N."/>
            <person name="Nakauchi H."/>
            <person name="Ng P."/>
            <person name="Nilsson R."/>
            <person name="Nishiguchi S."/>
            <person name="Nishikawa S."/>
            <person name="Nori F."/>
            <person name="Ohara O."/>
            <person name="Okazaki Y."/>
            <person name="Orlando V."/>
            <person name="Pang K.C."/>
            <person name="Pavan W.J."/>
            <person name="Pavesi G."/>
            <person name="Pesole G."/>
            <person name="Petrovsky N."/>
            <person name="Piazza S."/>
            <person name="Reed J."/>
            <person name="Reid J.F."/>
            <person name="Ring B.Z."/>
            <person name="Ringwald M."/>
            <person name="Rost B."/>
            <person name="Ruan Y."/>
            <person name="Salzberg S.L."/>
            <person name="Sandelin A."/>
            <person name="Schneider C."/>
            <person name="Schoenbach C."/>
            <person name="Sekiguchi K."/>
            <person name="Semple C.A."/>
            <person name="Seno S."/>
            <person name="Sessa L."/>
            <person name="Sheng Y."/>
            <person name="Shibata Y."/>
            <person name="Shimada H."/>
            <person name="Shimada K."/>
            <person name="Silva D."/>
            <person name="Sinclair B."/>
            <person name="Sperling S."/>
            <person name="Stupka E."/>
            <person name="Sugiura K."/>
            <person name="Sultana R."/>
            <person name="Takenaka Y."/>
            <person name="Taki K."/>
            <person name="Tammoja K."/>
            <person name="Tan S.L."/>
            <person name="Tang S."/>
            <person name="Taylor M.S."/>
            <person name="Tegner J."/>
            <person name="Teichmann S.A."/>
            <person name="Ueda H.R."/>
            <person name="van Nimwegen E."/>
            <person name="Verardo R."/>
            <person name="Wei C.L."/>
            <person name="Yagi K."/>
            <person name="Yamanishi H."/>
            <person name="Zabarovsky E."/>
            <person name="Zhu S."/>
            <person name="Zimmer A."/>
            <person name="Hide W."/>
            <person name="Bult C."/>
            <person name="Grimmond S.M."/>
            <person name="Teasdale R.D."/>
            <person name="Liu E.T."/>
            <person name="Brusic V."/>
            <person name="Quackenbush J."/>
            <person name="Wahlestedt C."/>
            <person name="Mattick J.S."/>
            <person name="Hume D.A."/>
            <person name="Kai C."/>
            <person name="Sasaki D."/>
            <person name="Tomaru Y."/>
            <person name="Fukuda S."/>
            <person name="Kanamori-Katayama M."/>
            <person name="Suzuki M."/>
            <person name="Aoki J."/>
            <person name="Arakawa T."/>
            <person name="Iida J."/>
            <person name="Imamura K."/>
            <person name="Itoh M."/>
            <person name="Kato T."/>
            <person name="Kawaji H."/>
            <person name="Kawagashira N."/>
            <person name="Kawashima T."/>
            <person name="Kojima M."/>
            <person name="Kondo S."/>
            <person name="Konno H."/>
            <person name="Nakano K."/>
            <person name="Ninomiya N."/>
            <person name="Nishio T."/>
            <person name="Okada M."/>
            <person name="Plessy C."/>
            <person name="Shibata K."/>
            <person name="Shiraki T."/>
            <person name="Suzuki S."/>
            <person name="Tagami M."/>
            <person name="Waki K."/>
            <person name="Watahiki A."/>
            <person name="Okamura-Oho Y."/>
            <person name="Suzuki H."/>
            <person name="Kawai J."/>
            <person name="Hayashizaki Y."/>
        </authorList>
    </citation>
    <scope>NUCLEOTIDE SEQUENCE [LARGE SCALE MRNA]</scope>
</reference>
<reference key="4">
    <citation type="submission" date="2005-07" db="EMBL/GenBank/DDBJ databases">
        <authorList>
            <person name="Mural R.J."/>
            <person name="Adams M.D."/>
            <person name="Myers E.W."/>
            <person name="Smith H.O."/>
            <person name="Venter J.C."/>
        </authorList>
    </citation>
    <scope>NUCLEOTIDE SEQUENCE [LARGE SCALE GENOMIC DNA]</scope>
</reference>
<reference key="5">
    <citation type="journal article" date="2004" name="Genome Res.">
        <title>The status, quality, and expansion of the NIH full-length cDNA project: the Mammalian Gene Collection (MGC).</title>
        <authorList>
            <consortium name="The MGC Project Team"/>
        </authorList>
    </citation>
    <scope>NUCLEOTIDE SEQUENCE [LARGE SCALE MRNA]</scope>
    <source>
        <strain>FVB/N</strain>
        <tissue>Mammary tumor</tissue>
    </source>
</reference>
<reference key="6">
    <citation type="journal article" date="1999" name="Genes Dev.">
        <title>Identification of a novel mechanism of regulation of Ah (dioxin) receptor function.</title>
        <authorList>
            <person name="Mimura J."/>
            <person name="Ema M."/>
            <person name="Sogawa K."/>
            <person name="Fujii-Kuriyama Y."/>
        </authorList>
    </citation>
    <scope>INTERACTION WITH AHRR</scope>
</reference>
<reference key="7">
    <citation type="journal article" date="2000" name="Mech. Dev.">
        <title>Isolation and characterization of AINT: a novel ARNT interacting protein expressed during murine embryonic development.</title>
        <authorList>
            <person name="Sadek C.M."/>
            <person name="Jalaguier S."/>
            <person name="Feeney E.P."/>
            <person name="Aitola M."/>
            <person name="Damdimopoulos A.E."/>
            <person name="Pelto-Huikko M."/>
            <person name="Gustafsson J.-A."/>
        </authorList>
    </citation>
    <scope>INTERACTION WITH TACC3</scope>
</reference>
<reference key="8">
    <citation type="journal article" date="2010" name="Cell">
        <title>A tissue-specific atlas of mouse protein phosphorylation and expression.</title>
        <authorList>
            <person name="Huttlin E.L."/>
            <person name="Jedrychowski M.P."/>
            <person name="Elias J.E."/>
            <person name="Goswami T."/>
            <person name="Rad R."/>
            <person name="Beausoleil S.A."/>
            <person name="Villen J."/>
            <person name="Haas W."/>
            <person name="Sowa M.E."/>
            <person name="Gygi S.P."/>
        </authorList>
    </citation>
    <scope>PHOSPHORYLATION [LARGE SCALE ANALYSIS] AT SER-77</scope>
    <scope>IDENTIFICATION BY MASS SPECTROMETRY [LARGE SCALE ANALYSIS]</scope>
    <source>
        <tissue>Spleen</tissue>
    </source>
</reference>
<reference key="9">
    <citation type="journal article" date="2013" name="Mol. Cell. Biol.">
        <title>Structure and dimerization properties of the aryl hydrocarbon receptor PAS-A domain.</title>
        <authorList>
            <person name="Wu D."/>
            <person name="Potluri N."/>
            <person name="Kim Y."/>
            <person name="Rastinejad F."/>
        </authorList>
    </citation>
    <scope>INTERACTION WITH AHR</scope>
    <scope>MUTAGENESIS OF LEU-167; ILE-168 AND ALA-171</scope>
    <scope>REGION</scope>
</reference>
<reference evidence="14 15 16 17 18" key="10">
    <citation type="journal article" date="2015" name="Nature">
        <title>Structural integration in hypoxia-inducible factors.</title>
        <authorList>
            <person name="Wu D."/>
            <person name="Potluri N."/>
            <person name="Lu J."/>
            <person name="Kim Y."/>
            <person name="Rastinejad F."/>
        </authorList>
    </citation>
    <scope>X-RAY CRYSTALLOGRAPHY (2.35 ANGSTROMS) OF 81-464 IN COMPLEXES WITH EPAS1; HIF1A; INHIBITOR AND DNA</scope>
    <scope>MUTAGENESIS OF HIS-94; GLU-98; ARG-102; LEU-112; LEU-132; VAL-136; LEU-167; ILE-168; ALA-171; ILE-264; ARG-266; VAL-305; HIS-307; ARG-366; ASN-448 AND TYR-456</scope>
    <scope>REGION</scope>
    <scope>INTERACTION WITH EPAS1 AND HIF1A</scope>
    <scope>FUNCTION</scope>
</reference>
<reference evidence="20 21" key="11">
    <citation type="journal article" date="2016" name="Elife">
        <title>NPAS1-ARNT and NPAS3-ARNT crystal structures implicate the bHLH-PAS family as multi-ligand binding transcription factors.</title>
        <authorList>
            <person name="Wu D."/>
            <person name="Su X."/>
            <person name="Potluri N."/>
            <person name="Kim Y."/>
            <person name="Rastinejad F."/>
        </authorList>
    </citation>
    <scope>X-RAY CRYSTALLOGRAPHY (3.20 ANGSTROMS) OF 81-464 IN COMPLEXES WITH NPAS1; NPAS3 AND DNA</scope>
    <scope>MUTAGENESIS OF LEU-112; LEU-132; VAL-136; LEU-167; ILE-168; ALA-171; ILE-264; ARG-266; VAL-305; HIS-307; ARG-366; ASN-448 AND TYR-456</scope>
    <scope>INTERACTION WITH NPAS1; NPAS3; SIM1; NPAS4 AND AHR</scope>
    <scope>FUNCTION</scope>
</reference>
<reference evidence="19" key="12">
    <citation type="journal article" date="2017" name="Structure">
        <title>Structural Basis for Aryl Hydrocarbon Receptor-Mediated Gene Activation.</title>
        <authorList>
            <person name="Schulte K.W."/>
            <person name="Green E."/>
            <person name="Wilz A."/>
            <person name="Platten M."/>
            <person name="Daumke O."/>
        </authorList>
    </citation>
    <scope>X-RAY CRYSTALLOGRAPHY (3.30 ANGSTROMS) OF 84-345 IN COMPLEXES WITH AHR AND DNA</scope>
    <scope>SUBUNIT</scope>
    <scope>INTERACTION WITH AHR</scope>
    <scope>MUTAGENESIS OF ARG-102; LEU-112; MET-139 AND LEU-164</scope>
    <scope>FUNCTION</scope>
    <scope>REGION</scope>
</reference>
<accession>P53762</accession>
<accession>Q60661</accession>
<accession>Q921F3</accession>
<gene>
    <name type="primary">Arnt</name>
</gene>
<sequence>MAATTANPEMTSDVPSLGPTIASGNPGPGIQGGGAVVQRAIKRRSGLDFDDEVEVNTKFLRCDDDQMCNDKERFARSDDEQSSADKERLARENHSEIERRRRNKMTAYITELSDMVPTCSALARKPDKLTILRMAVSHMKSLRGTGNTSTDGSYKPSFLTDQELKHLILEAADGFLFIVSCETGRVVYVSDSVTPVLNQPQSEWFGSTLYDQVHPDDVDKLREQLSTSENALTGRVLDLKTGTVKKEGQQSSMRMCMGSRRSFICRMRCGTSSVDPVSMNRLSFLRNRCRNGLGSVKEGEPHFVVVHCTGYIKAWPPAGVSLPDDDPEAGQGSKFCLVAIGRLQVTSSPNCTDMSNICQPTEFISRHNIEGIFTFVDHRCVATVGYQPQELLGKNIVEFCHPEDQQLLRDSFQQVVKLKGQVLSVMFRFRSKTREWLWMRTSSFTFQNPYSDEIEYIICTNTNVKNSSQEPRPTLSNTIPRSQLGPTANLSLEMGTGQLPSRQQQQQHTELDMVPGRDGLASYNHSQVSVQPVASAGSEHSKPLEKSEGLFAQDRDPRFPEIYPSITADQSKGISSSTVPATQQLFSQGSSFPPNPRPAENFRNSGLTPPVTIVQPSSSAGQILAQISRHSNPAQGSAPTWTSSSRPGFAAQQVPTQATAKTRSSQFGVNNFQTSSSFSAMSLPGAPTASSGTAAYPALPNRGSNFPPETGQTTGQFQARTAEGVGVWPQWQGQQPHHRSSSSEQHVQQTQAQAPSQPEVFQEMLSMLGDQSNTYNNEEFPDLTMFPPFSE</sequence>
<comment type="function">
    <text evidence="1 8 9 10">Required for activity of the Ah (dioxin) receptor. This protein is required for the ligand-binding subunit to translocate from the cytosol to the nucleus after ligand binding. The complex then initiates transcription of genes involved in the activation of PAH procarcinogens (By similarity). The heterodimer binds to core DNA sequence 5'-TACGTG-3' within the hypoxia response element (HRE) of target gene promoters and functions as a transcriptional regulator of the adaptive response to hypoxia (PubMed:26245371, PubMed:27782878). The heterodimer ARNT:AHR binds to core DNA sequence 5'-TGCGTG-3' within the dioxin response element (DRE) of target gene promoters and activates their transcription (PubMed:28602820).</text>
</comment>
<comment type="function">
    <text evidence="2 8 9 10">Required for activity of the AHR. Upon ligand binding, AHR translocates into the nucleus, where it heterodimerizes with ARNT and induces transcription by binding to xenobiotic response elements (XRE). Not required for the ligand-binding subunit to translocate from the cytosol to the nucleus after ligand binding. The complex initiates transcription of genes involved in the regulation of a variety of biological processes, including angiogenesis, hematopoiesis, drug and lipid metabolism, cell motility and immune modulation (By similarity). The heterodimer binds to core DNA sequence 5'-TACGTG-3' within the hypoxia response element (HRE) of target gene promoters and functions as a transcriptional regulator of the adaptive response to hypoxia (PubMed:26245371, PubMed:27782878). The heterodimer ARNT:AHR binds to core DNA sequence 5'-TGCGTG-3' within the dioxin response element (DRE) of target gene promoters and activates their transcription (PubMed:26245371, PubMed:27782878, PubMed:28602820).</text>
</comment>
<comment type="subunit">
    <text evidence="1 2 6 7 8 9 10 11">Monomer (PubMed:28602820). Homodimer only upon binding to a DNA (PubMed:26245371, PubMed:28602820). Efficient DNA binding requires dimerization with another bHLH protein (By similarity). Interacts with TACC3 (PubMed:11025203). Interacts with HIF1A, EPAS1, NPAS1 and NPAS3; forms a heterodimer that binds core DNA sequence 5'-TACGTG-3' within the hypoxia response element (HRE) of target gene promoters (PubMed:26245371, PubMed:27782878). Forms a heterodimer with AHRR, as well as with other bHLH proteins (PubMed:9887096). Interacts with NOCA7 (By similarity). Interacts with AHR; the heterodimer ARNT:AHR binds to core DNA sequence 5'-TGCGTG-3' within the dioxin response element (DRE) of target gene promoters and activates their transcription (PubMed:24001774, PubMed:27782878, PubMed:28602820). Interacts with SIM1 and NPAS4 (PubMed:27782878).</text>
</comment>
<comment type="interaction">
    <interactant intactId="EBI-78852">
        <id>P53762</id>
    </interactant>
    <interactant intactId="EBI-78863">
        <id>P30561</id>
        <label>Ahr</label>
    </interactant>
    <organismsDiffer>false</organismsDiffer>
    <experiments>2</experiments>
</comment>
<comment type="interaction">
    <interactant intactId="EBI-78852">
        <id>P53762</id>
    </interactant>
    <interactant intactId="EBI-15704570">
        <id>P97481</id>
        <label>Epas1</label>
    </interactant>
    <organismsDiffer>false</organismsDiffer>
    <experiments>5</experiments>
</comment>
<comment type="interaction">
    <interactant intactId="EBI-78852">
        <id>P53762</id>
    </interactant>
    <interactant intactId="EBI-298954">
        <id>Q61221</id>
        <label>Hif1a</label>
    </interactant>
    <organismsDiffer>false</organismsDiffer>
    <experiments>6</experiments>
</comment>
<comment type="interaction">
    <interactant intactId="EBI-78852">
        <id>P53762</id>
    </interactant>
    <interactant intactId="EBI-8549331">
        <id>Q61221-1</id>
        <label>Hif1a</label>
    </interactant>
    <organismsDiffer>false</organismsDiffer>
    <experiments>5</experiments>
</comment>
<comment type="interaction">
    <interactant intactId="EBI-78852">
        <id>P53762</id>
    </interactant>
    <interactant intactId="EBI-78890">
        <id>Q61045</id>
        <label>Sim1</label>
    </interactant>
    <organismsDiffer>false</organismsDiffer>
    <experiments>4</experiments>
</comment>
<comment type="subcellular location">
    <subcellularLocation>
        <location evidence="2">Nucleus</location>
    </subcellularLocation>
</comment>
<comment type="alternative products">
    <event type="alternative splicing"/>
    <isoform>
        <id>P53762-1</id>
        <name>Long</name>
        <sequence type="displayed"/>
    </isoform>
    <isoform>
        <id>P53762-2</id>
        <name>Short</name>
        <sequence type="described" ref="VSP_002093"/>
    </isoform>
</comment>
<comment type="tissue specificity">
    <text>Ubiquitous.</text>
</comment>
<proteinExistence type="evidence at protein level"/>
<protein>
    <recommendedName>
        <fullName>Aryl hydrocarbon receptor nuclear translocator</fullName>
        <shortName>ARNT protein</shortName>
    </recommendedName>
    <alternativeName>
        <fullName>Dioxin receptor, nuclear translocator</fullName>
    </alternativeName>
    <alternativeName>
        <fullName>Hypoxia-inducible factor 1-beta</fullName>
        <shortName>HIF-1-beta</shortName>
        <shortName>HIF1-beta</shortName>
    </alternativeName>
</protein>
<organism>
    <name type="scientific">Mus musculus</name>
    <name type="common">Mouse</name>
    <dbReference type="NCBI Taxonomy" id="10090"/>
    <lineage>
        <taxon>Eukaryota</taxon>
        <taxon>Metazoa</taxon>
        <taxon>Chordata</taxon>
        <taxon>Craniata</taxon>
        <taxon>Vertebrata</taxon>
        <taxon>Euteleostomi</taxon>
        <taxon>Mammalia</taxon>
        <taxon>Eutheria</taxon>
        <taxon>Euarchontoglires</taxon>
        <taxon>Glires</taxon>
        <taxon>Rodentia</taxon>
        <taxon>Myomorpha</taxon>
        <taxon>Muroidea</taxon>
        <taxon>Muridae</taxon>
        <taxon>Murinae</taxon>
        <taxon>Mus</taxon>
        <taxon>Mus</taxon>
    </lineage>
</organism>
<evidence type="ECO:0000250" key="1"/>
<evidence type="ECO:0000250" key="2">
    <source>
        <dbReference type="UniProtKB" id="P27540"/>
    </source>
</evidence>
<evidence type="ECO:0000255" key="3">
    <source>
        <dbReference type="PROSITE-ProRule" id="PRU00140"/>
    </source>
</evidence>
<evidence type="ECO:0000255" key="4">
    <source>
        <dbReference type="PROSITE-ProRule" id="PRU00981"/>
    </source>
</evidence>
<evidence type="ECO:0000256" key="5">
    <source>
        <dbReference type="SAM" id="MobiDB-lite"/>
    </source>
</evidence>
<evidence type="ECO:0000269" key="6">
    <source>
    </source>
</evidence>
<evidence type="ECO:0000269" key="7">
    <source>
    </source>
</evidence>
<evidence type="ECO:0000269" key="8">
    <source>
    </source>
</evidence>
<evidence type="ECO:0000269" key="9">
    <source>
    </source>
</evidence>
<evidence type="ECO:0000269" key="10">
    <source>
    </source>
</evidence>
<evidence type="ECO:0000269" key="11">
    <source>
    </source>
</evidence>
<evidence type="ECO:0000303" key="12">
    <source>
    </source>
</evidence>
<evidence type="ECO:0000305" key="13"/>
<evidence type="ECO:0007744" key="14">
    <source>
        <dbReference type="PDB" id="4ZP4"/>
    </source>
</evidence>
<evidence type="ECO:0007744" key="15">
    <source>
        <dbReference type="PDB" id="4ZPH"/>
    </source>
</evidence>
<evidence type="ECO:0007744" key="16">
    <source>
        <dbReference type="PDB" id="4ZPK"/>
    </source>
</evidence>
<evidence type="ECO:0007744" key="17">
    <source>
        <dbReference type="PDB" id="4ZPR"/>
    </source>
</evidence>
<evidence type="ECO:0007744" key="18">
    <source>
        <dbReference type="PDB" id="4ZQD"/>
    </source>
</evidence>
<evidence type="ECO:0007744" key="19">
    <source>
        <dbReference type="PDB" id="5NJ8"/>
    </source>
</evidence>
<evidence type="ECO:0007744" key="20">
    <source>
        <dbReference type="PDB" id="5SY5"/>
    </source>
</evidence>
<evidence type="ECO:0007744" key="21">
    <source>
        <dbReference type="PDB" id="5SY7"/>
    </source>
</evidence>
<evidence type="ECO:0007744" key="22">
    <source>
    </source>
</evidence>
<evidence type="ECO:0007829" key="23">
    <source>
        <dbReference type="PDB" id="4ZP4"/>
    </source>
</evidence>
<evidence type="ECO:0007829" key="24">
    <source>
        <dbReference type="PDB" id="5SY5"/>
    </source>
</evidence>
<evidence type="ECO:0007829" key="25">
    <source>
        <dbReference type="PDB" id="6E3U"/>
    </source>
</evidence>
<evidence type="ECO:0007829" key="26">
    <source>
        <dbReference type="PDB" id="7V7L"/>
    </source>
</evidence>
<evidence type="ECO:0007829" key="27">
    <source>
        <dbReference type="PDB" id="7VNI"/>
    </source>
</evidence>
<dbReference type="EMBL" id="U10325">
    <property type="protein sequence ID" value="AAA56717.1"/>
    <property type="molecule type" value="mRNA"/>
</dbReference>
<dbReference type="EMBL" id="U14333">
    <property type="protein sequence ID" value="AAA61732.1"/>
    <property type="molecule type" value="mRNA"/>
</dbReference>
<dbReference type="EMBL" id="AK153355">
    <property type="protein sequence ID" value="BAE31928.1"/>
    <property type="molecule type" value="mRNA"/>
</dbReference>
<dbReference type="EMBL" id="CH466620">
    <property type="protein sequence ID" value="EDL38816.1"/>
    <property type="molecule type" value="Genomic_DNA"/>
</dbReference>
<dbReference type="EMBL" id="BC012870">
    <property type="protein sequence ID" value="AAH12870.1"/>
    <property type="molecule type" value="mRNA"/>
</dbReference>
<dbReference type="CCDS" id="CCDS17614.1">
    <molecule id="P53762-1"/>
</dbReference>
<dbReference type="PIR" id="A55448">
    <property type="entry name" value="A55448"/>
</dbReference>
<dbReference type="PIR" id="A56241">
    <property type="entry name" value="A56241"/>
</dbReference>
<dbReference type="RefSeq" id="NP_001032826.1">
    <molecule id="P53762-1"/>
    <property type="nucleotide sequence ID" value="NM_001037737.2"/>
</dbReference>
<dbReference type="PDB" id="4ZP4">
    <property type="method" value="X-ray"/>
    <property type="resolution" value="2.35 A"/>
    <property type="chains" value="A/C=82-464"/>
</dbReference>
<dbReference type="PDB" id="4ZPH">
    <property type="method" value="X-ray"/>
    <property type="resolution" value="2.80 A"/>
    <property type="chains" value="A/C=82-464"/>
</dbReference>
<dbReference type="PDB" id="4ZPK">
    <property type="method" value="X-ray"/>
    <property type="resolution" value="3.60 A"/>
    <property type="chains" value="A=82-464"/>
</dbReference>
<dbReference type="PDB" id="4ZPR">
    <property type="method" value="X-ray"/>
    <property type="resolution" value="3.90 A"/>
    <property type="chains" value="A=82-464"/>
</dbReference>
<dbReference type="PDB" id="4ZQD">
    <property type="method" value="X-ray"/>
    <property type="resolution" value="2.87 A"/>
    <property type="chains" value="A/C=82-464"/>
</dbReference>
<dbReference type="PDB" id="5NJ8">
    <property type="method" value="X-ray"/>
    <property type="resolution" value="3.30 A"/>
    <property type="chains" value="B/D=84-345"/>
</dbReference>
<dbReference type="PDB" id="5SY5">
    <property type="method" value="X-ray"/>
    <property type="resolution" value="3.20 A"/>
    <property type="chains" value="A/C/E=82-464"/>
</dbReference>
<dbReference type="PDB" id="5SY7">
    <property type="method" value="X-ray"/>
    <property type="resolution" value="4.20 A"/>
    <property type="chains" value="A=82-464"/>
</dbReference>
<dbReference type="PDB" id="6E3S">
    <property type="method" value="X-ray"/>
    <property type="resolution" value="3.00 A"/>
    <property type="chains" value="A=81-464"/>
</dbReference>
<dbReference type="PDB" id="6E3T">
    <property type="method" value="X-ray"/>
    <property type="resolution" value="3.00 A"/>
    <property type="chains" value="A=81-464"/>
</dbReference>
<dbReference type="PDB" id="6E3U">
    <property type="method" value="X-ray"/>
    <property type="resolution" value="2.85 A"/>
    <property type="chains" value="A=81-464"/>
</dbReference>
<dbReference type="PDB" id="7V7L">
    <property type="method" value="X-ray"/>
    <property type="resolution" value="2.30 A"/>
    <property type="chains" value="A=81-464"/>
</dbReference>
<dbReference type="PDB" id="7V7W">
    <property type="method" value="X-ray"/>
    <property type="resolution" value="2.51 A"/>
    <property type="chains" value="A=81-464"/>
</dbReference>
<dbReference type="PDB" id="7VNI">
    <property type="method" value="X-ray"/>
    <property type="resolution" value="2.00 A"/>
    <property type="chains" value="C/D=358-466"/>
</dbReference>
<dbReference type="PDB" id="7W80">
    <property type="method" value="X-ray"/>
    <property type="resolution" value="2.75 A"/>
    <property type="chains" value="A=81-464"/>
</dbReference>
<dbReference type="PDB" id="7XHV">
    <property type="method" value="X-ray"/>
    <property type="resolution" value="4.00 A"/>
    <property type="chains" value="A=82-360"/>
</dbReference>
<dbReference type="PDB" id="7XI4">
    <property type="method" value="X-ray"/>
    <property type="resolution" value="4.71 A"/>
    <property type="chains" value="A=82-464"/>
</dbReference>
<dbReference type="PDBsum" id="4ZP4"/>
<dbReference type="PDBsum" id="4ZPH"/>
<dbReference type="PDBsum" id="4ZPK"/>
<dbReference type="PDBsum" id="4ZPR"/>
<dbReference type="PDBsum" id="4ZQD"/>
<dbReference type="PDBsum" id="5NJ8"/>
<dbReference type="PDBsum" id="5SY5"/>
<dbReference type="PDBsum" id="5SY7"/>
<dbReference type="PDBsum" id="6E3S"/>
<dbReference type="PDBsum" id="6E3T"/>
<dbReference type="PDBsum" id="6E3U"/>
<dbReference type="PDBsum" id="7V7L"/>
<dbReference type="PDBsum" id="7V7W"/>
<dbReference type="PDBsum" id="7VNI"/>
<dbReference type="PDBsum" id="7W80"/>
<dbReference type="PDBsum" id="7XHV"/>
<dbReference type="PDBsum" id="7XI4"/>
<dbReference type="SMR" id="P53762"/>
<dbReference type="BioGRID" id="198205">
    <property type="interactions" value="39"/>
</dbReference>
<dbReference type="CORUM" id="P53762"/>
<dbReference type="DIP" id="DIP-280N"/>
<dbReference type="FunCoup" id="P53762">
    <property type="interactions" value="3902"/>
</dbReference>
<dbReference type="IntAct" id="P53762">
    <property type="interactions" value="10"/>
</dbReference>
<dbReference type="MINT" id="P53762"/>
<dbReference type="STRING" id="10090.ENSMUSP00000099810"/>
<dbReference type="GlyGen" id="P53762">
    <property type="glycosylation" value="8 sites, 1 O-linked glycan (8 sites)"/>
</dbReference>
<dbReference type="iPTMnet" id="P53762"/>
<dbReference type="PhosphoSitePlus" id="P53762"/>
<dbReference type="jPOST" id="P53762"/>
<dbReference type="PaxDb" id="10090-ENSMUSP00000099810"/>
<dbReference type="ProteomicsDB" id="281830">
    <molecule id="P53762-1"/>
</dbReference>
<dbReference type="ProteomicsDB" id="281831">
    <molecule id="P53762-2"/>
</dbReference>
<dbReference type="Pumba" id="P53762"/>
<dbReference type="Antibodypedia" id="916">
    <property type="antibodies" value="702 antibodies from 42 providers"/>
</dbReference>
<dbReference type="DNASU" id="11863"/>
<dbReference type="Ensembl" id="ENSMUST00000102749.11">
    <molecule id="P53762-1"/>
    <property type="protein sequence ID" value="ENSMUSP00000099810.5"/>
    <property type="gene ID" value="ENSMUSG00000015522.20"/>
</dbReference>
<dbReference type="GeneID" id="11863"/>
<dbReference type="KEGG" id="mmu:11863"/>
<dbReference type="UCSC" id="uc008qjr.2">
    <molecule id="P53762-1"/>
    <property type="organism name" value="mouse"/>
</dbReference>
<dbReference type="AGR" id="MGI:88071"/>
<dbReference type="CTD" id="405"/>
<dbReference type="MGI" id="MGI:88071">
    <property type="gene designation" value="Arnt"/>
</dbReference>
<dbReference type="VEuPathDB" id="HostDB:ENSMUSG00000015522"/>
<dbReference type="eggNOG" id="KOG3561">
    <property type="taxonomic scope" value="Eukaryota"/>
</dbReference>
<dbReference type="GeneTree" id="ENSGT00940000157585"/>
<dbReference type="InParanoid" id="P53762"/>
<dbReference type="OMA" id="LXSDDEQ"/>
<dbReference type="OrthoDB" id="30669at9989"/>
<dbReference type="PhylomeDB" id="P53762"/>
<dbReference type="TreeFam" id="TF319983"/>
<dbReference type="Reactome" id="R-MMU-1234158">
    <property type="pathway name" value="Regulation of gene expression by Hypoxia-inducible Factor"/>
</dbReference>
<dbReference type="Reactome" id="R-MMU-211945">
    <property type="pathway name" value="Phase I - Functionalization of compounds"/>
</dbReference>
<dbReference type="Reactome" id="R-MMU-211976">
    <property type="pathway name" value="Endogenous sterols"/>
</dbReference>
<dbReference type="Reactome" id="R-MMU-211981">
    <property type="pathway name" value="Xenobiotics"/>
</dbReference>
<dbReference type="Reactome" id="R-MMU-8937144">
    <property type="pathway name" value="Aryl hydrocarbon receptor signalling"/>
</dbReference>
<dbReference type="Reactome" id="R-MMU-9768919">
    <property type="pathway name" value="NPAS4 regulates expression of target genes"/>
</dbReference>
<dbReference type="BioGRID-ORCS" id="11863">
    <property type="hits" value="4 hits in 83 CRISPR screens"/>
</dbReference>
<dbReference type="ChiTaRS" id="Arnt">
    <property type="organism name" value="mouse"/>
</dbReference>
<dbReference type="EvolutionaryTrace" id="P53762"/>
<dbReference type="PRO" id="PR:P53762"/>
<dbReference type="Proteomes" id="UP000000589">
    <property type="component" value="Chromosome 3"/>
</dbReference>
<dbReference type="RNAct" id="P53762">
    <property type="molecule type" value="protein"/>
</dbReference>
<dbReference type="Bgee" id="ENSMUSG00000015522">
    <property type="expression patterns" value="Expressed in ascending aorta and 287 other cell types or tissues"/>
</dbReference>
<dbReference type="ExpressionAtlas" id="P53762">
    <property type="expression patterns" value="baseline and differential"/>
</dbReference>
<dbReference type="GO" id="GO:0005737">
    <property type="term" value="C:cytoplasm"/>
    <property type="evidence" value="ECO:0000314"/>
    <property type="project" value="MGI"/>
</dbReference>
<dbReference type="GO" id="GO:0034753">
    <property type="term" value="C:nuclear aryl hydrocarbon receptor complex"/>
    <property type="evidence" value="ECO:0000250"/>
    <property type="project" value="UniProtKB"/>
</dbReference>
<dbReference type="GO" id="GO:0016604">
    <property type="term" value="C:nuclear body"/>
    <property type="evidence" value="ECO:0007669"/>
    <property type="project" value="Ensembl"/>
</dbReference>
<dbReference type="GO" id="GO:0005634">
    <property type="term" value="C:nucleus"/>
    <property type="evidence" value="ECO:0000314"/>
    <property type="project" value="MGI"/>
</dbReference>
<dbReference type="GO" id="GO:0090575">
    <property type="term" value="C:RNA polymerase II transcription regulator complex"/>
    <property type="evidence" value="ECO:0007669"/>
    <property type="project" value="Ensembl"/>
</dbReference>
<dbReference type="GO" id="GO:0005667">
    <property type="term" value="C:transcription regulator complex"/>
    <property type="evidence" value="ECO:0000314"/>
    <property type="project" value="MGI"/>
</dbReference>
<dbReference type="GO" id="GO:0017162">
    <property type="term" value="F:aryl hydrocarbon receptor binding"/>
    <property type="evidence" value="ECO:0007669"/>
    <property type="project" value="Ensembl"/>
</dbReference>
<dbReference type="GO" id="GO:0000987">
    <property type="term" value="F:cis-regulatory region sequence-specific DNA binding"/>
    <property type="evidence" value="ECO:0000266"/>
    <property type="project" value="MGI"/>
</dbReference>
<dbReference type="GO" id="GO:0003700">
    <property type="term" value="F:DNA-binding transcription factor activity"/>
    <property type="evidence" value="ECO:0000314"/>
    <property type="project" value="UniProtKB"/>
</dbReference>
<dbReference type="GO" id="GO:0004879">
    <property type="term" value="F:nuclear receptor activity"/>
    <property type="evidence" value="ECO:0007669"/>
    <property type="project" value="Ensembl"/>
</dbReference>
<dbReference type="GO" id="GO:0046982">
    <property type="term" value="F:protein heterodimerization activity"/>
    <property type="evidence" value="ECO:0000314"/>
    <property type="project" value="UniProtKB"/>
</dbReference>
<dbReference type="GO" id="GO:0042803">
    <property type="term" value="F:protein homodimerization activity"/>
    <property type="evidence" value="ECO:0000250"/>
    <property type="project" value="UniProtKB"/>
</dbReference>
<dbReference type="GO" id="GO:0000978">
    <property type="term" value="F:RNA polymerase II cis-regulatory region sequence-specific DNA binding"/>
    <property type="evidence" value="ECO:0000316"/>
    <property type="project" value="MGI"/>
</dbReference>
<dbReference type="GO" id="GO:0043565">
    <property type="term" value="F:sequence-specific DNA binding"/>
    <property type="evidence" value="ECO:0000314"/>
    <property type="project" value="UniProtKB"/>
</dbReference>
<dbReference type="GO" id="GO:1990837">
    <property type="term" value="F:sequence-specific double-stranded DNA binding"/>
    <property type="evidence" value="ECO:0000314"/>
    <property type="project" value="UniProtKB"/>
</dbReference>
<dbReference type="GO" id="GO:0030154">
    <property type="term" value="P:cell differentiation"/>
    <property type="evidence" value="ECO:0000315"/>
    <property type="project" value="MGI"/>
</dbReference>
<dbReference type="GO" id="GO:0034599">
    <property type="term" value="P:cellular response to oxidative stress"/>
    <property type="evidence" value="ECO:0007669"/>
    <property type="project" value="Ensembl"/>
</dbReference>
<dbReference type="GO" id="GO:0001892">
    <property type="term" value="P:embryonic placenta development"/>
    <property type="evidence" value="ECO:0000315"/>
    <property type="project" value="MGI"/>
</dbReference>
<dbReference type="GO" id="GO:0050728">
    <property type="term" value="P:negative regulation of inflammatory response"/>
    <property type="evidence" value="ECO:0007669"/>
    <property type="project" value="Ensembl"/>
</dbReference>
<dbReference type="GO" id="GO:0045893">
    <property type="term" value="P:positive regulation of DNA-templated transcription"/>
    <property type="evidence" value="ECO:0000314"/>
    <property type="project" value="MGI"/>
</dbReference>
<dbReference type="GO" id="GO:0045821">
    <property type="term" value="P:positive regulation of glycolytic process"/>
    <property type="evidence" value="ECO:0007669"/>
    <property type="project" value="Ensembl"/>
</dbReference>
<dbReference type="GO" id="GO:0046886">
    <property type="term" value="P:positive regulation of hormone biosynthetic process"/>
    <property type="evidence" value="ECO:0007669"/>
    <property type="project" value="Ensembl"/>
</dbReference>
<dbReference type="GO" id="GO:0033235">
    <property type="term" value="P:positive regulation of protein sumoylation"/>
    <property type="evidence" value="ECO:0000314"/>
    <property type="project" value="BHF-UCL"/>
</dbReference>
<dbReference type="GO" id="GO:0045944">
    <property type="term" value="P:positive regulation of transcription by RNA polymerase II"/>
    <property type="evidence" value="ECO:0000316"/>
    <property type="project" value="MGI"/>
</dbReference>
<dbReference type="GO" id="GO:0010575">
    <property type="term" value="P:positive regulation of vascular endothelial growth factor production"/>
    <property type="evidence" value="ECO:0007669"/>
    <property type="project" value="Ensembl"/>
</dbReference>
<dbReference type="GO" id="GO:0001666">
    <property type="term" value="P:response to hypoxia"/>
    <property type="evidence" value="ECO:0000314"/>
    <property type="project" value="MGI"/>
</dbReference>
<dbReference type="GO" id="GO:0009636">
    <property type="term" value="P:response to toxic substance"/>
    <property type="evidence" value="ECO:0000304"/>
    <property type="project" value="MGI"/>
</dbReference>
<dbReference type="CDD" id="cd18947">
    <property type="entry name" value="bHLH-PAS_ARNT"/>
    <property type="match status" value="1"/>
</dbReference>
<dbReference type="CDD" id="cd00130">
    <property type="entry name" value="PAS"/>
    <property type="match status" value="2"/>
</dbReference>
<dbReference type="FunFam" id="3.30.450.20:FF:000028">
    <property type="entry name" value="Aryl hydrocarbon receptor nuclear translocator 1"/>
    <property type="match status" value="1"/>
</dbReference>
<dbReference type="FunFam" id="3.30.450.20:FF:000003">
    <property type="entry name" value="Aryl hydrocarbon receptor nuclear translocator 2"/>
    <property type="match status" value="1"/>
</dbReference>
<dbReference type="FunFam" id="4.10.280.10:FF:000011">
    <property type="entry name" value="Aryl hydrocarbon receptor nuclear translocator 2"/>
    <property type="match status" value="1"/>
</dbReference>
<dbReference type="Gene3D" id="4.10.280.10">
    <property type="entry name" value="Helix-loop-helix DNA-binding domain"/>
    <property type="match status" value="1"/>
</dbReference>
<dbReference type="Gene3D" id="3.30.450.20">
    <property type="entry name" value="PAS domain"/>
    <property type="match status" value="2"/>
</dbReference>
<dbReference type="InterPro" id="IPR011598">
    <property type="entry name" value="bHLH_dom"/>
</dbReference>
<dbReference type="InterPro" id="IPR050933">
    <property type="entry name" value="Circadian_TF"/>
</dbReference>
<dbReference type="InterPro" id="IPR036638">
    <property type="entry name" value="HLH_DNA-bd_sf"/>
</dbReference>
<dbReference type="InterPro" id="IPR001067">
    <property type="entry name" value="Nuc_translocat"/>
</dbReference>
<dbReference type="InterPro" id="IPR001610">
    <property type="entry name" value="PAC"/>
</dbReference>
<dbReference type="InterPro" id="IPR000014">
    <property type="entry name" value="PAS"/>
</dbReference>
<dbReference type="InterPro" id="IPR035965">
    <property type="entry name" value="PAS-like_dom_sf"/>
</dbReference>
<dbReference type="InterPro" id="IPR013767">
    <property type="entry name" value="PAS_fold"/>
</dbReference>
<dbReference type="NCBIfam" id="TIGR00229">
    <property type="entry name" value="sensory_box"/>
    <property type="match status" value="1"/>
</dbReference>
<dbReference type="PANTHER" id="PTHR23042">
    <property type="entry name" value="CIRCADIAN PROTEIN CLOCK/ARNT/BMAL/PAS"/>
    <property type="match status" value="1"/>
</dbReference>
<dbReference type="Pfam" id="PF00010">
    <property type="entry name" value="HLH"/>
    <property type="match status" value="1"/>
</dbReference>
<dbReference type="Pfam" id="PF00989">
    <property type="entry name" value="PAS"/>
    <property type="match status" value="1"/>
</dbReference>
<dbReference type="Pfam" id="PF14598">
    <property type="entry name" value="PAS_11"/>
    <property type="match status" value="1"/>
</dbReference>
<dbReference type="PRINTS" id="PR00785">
    <property type="entry name" value="NCTRNSLOCATR"/>
</dbReference>
<dbReference type="SMART" id="SM00353">
    <property type="entry name" value="HLH"/>
    <property type="match status" value="1"/>
</dbReference>
<dbReference type="SMART" id="SM00086">
    <property type="entry name" value="PAC"/>
    <property type="match status" value="1"/>
</dbReference>
<dbReference type="SMART" id="SM00091">
    <property type="entry name" value="PAS"/>
    <property type="match status" value="2"/>
</dbReference>
<dbReference type="SUPFAM" id="SSF47459">
    <property type="entry name" value="HLH, helix-loop-helix DNA-binding domain"/>
    <property type="match status" value="1"/>
</dbReference>
<dbReference type="SUPFAM" id="SSF88633">
    <property type="entry name" value="Positive stranded ssRNA viruses"/>
    <property type="match status" value="1"/>
</dbReference>
<dbReference type="SUPFAM" id="SSF55785">
    <property type="entry name" value="PYP-like sensor domain (PAS domain)"/>
    <property type="match status" value="2"/>
</dbReference>
<dbReference type="PROSITE" id="PS50888">
    <property type="entry name" value="BHLH"/>
    <property type="match status" value="1"/>
</dbReference>
<dbReference type="PROSITE" id="PS50112">
    <property type="entry name" value="PAS"/>
    <property type="match status" value="2"/>
</dbReference>